<dbReference type="EC" id="2.1.1.195" evidence="1"/>
<dbReference type="EMBL" id="CP000727">
    <property type="protein sequence ID" value="ABS38858.1"/>
    <property type="molecule type" value="Genomic_DNA"/>
</dbReference>
<dbReference type="EMBL" id="AM412317">
    <property type="protein sequence ID" value="CAL82489.1"/>
    <property type="molecule type" value="Genomic_DNA"/>
</dbReference>
<dbReference type="RefSeq" id="WP_011948621.1">
    <property type="nucleotide sequence ID" value="NC_009698.1"/>
</dbReference>
<dbReference type="RefSeq" id="YP_001253469.1">
    <property type="nucleotide sequence ID" value="NC_009495.1"/>
</dbReference>
<dbReference type="RefSeq" id="YP_001386859.1">
    <property type="nucleotide sequence ID" value="NC_009698.1"/>
</dbReference>
<dbReference type="SMR" id="A5I0C8"/>
<dbReference type="GeneID" id="5185191"/>
<dbReference type="KEGG" id="cbh:CLC_0991"/>
<dbReference type="KEGG" id="cbo:CBO0936"/>
<dbReference type="PATRIC" id="fig|413999.7.peg.933"/>
<dbReference type="HOGENOM" id="CLU_041273_1_0_9"/>
<dbReference type="UniPathway" id="UPA00148">
    <property type="reaction ID" value="UER00227"/>
</dbReference>
<dbReference type="PRO" id="PR:A5I0C8"/>
<dbReference type="Proteomes" id="UP000001986">
    <property type="component" value="Chromosome"/>
</dbReference>
<dbReference type="GO" id="GO:0043780">
    <property type="term" value="F:cobalt-precorrin-5B C1-methyltransferase activity"/>
    <property type="evidence" value="ECO:0007669"/>
    <property type="project" value="RHEA"/>
</dbReference>
<dbReference type="GO" id="GO:0019251">
    <property type="term" value="P:anaerobic cobalamin biosynthetic process"/>
    <property type="evidence" value="ECO:0007669"/>
    <property type="project" value="UniProtKB-UniRule"/>
</dbReference>
<dbReference type="GO" id="GO:0032259">
    <property type="term" value="P:methylation"/>
    <property type="evidence" value="ECO:0007669"/>
    <property type="project" value="UniProtKB-KW"/>
</dbReference>
<dbReference type="Gene3D" id="3.30.2110.10">
    <property type="entry name" value="CbiD-like"/>
    <property type="match status" value="1"/>
</dbReference>
<dbReference type="HAMAP" id="MF_00787">
    <property type="entry name" value="CbiD"/>
    <property type="match status" value="1"/>
</dbReference>
<dbReference type="InterPro" id="IPR002748">
    <property type="entry name" value="CbiD"/>
</dbReference>
<dbReference type="InterPro" id="IPR036074">
    <property type="entry name" value="CbiD_sf"/>
</dbReference>
<dbReference type="NCBIfam" id="TIGR00312">
    <property type="entry name" value="cbiD"/>
    <property type="match status" value="1"/>
</dbReference>
<dbReference type="PANTHER" id="PTHR35863">
    <property type="entry name" value="COBALT-PRECORRIN-5B C(1)-METHYLTRANSFERASE"/>
    <property type="match status" value="1"/>
</dbReference>
<dbReference type="PANTHER" id="PTHR35863:SF1">
    <property type="entry name" value="COBALT-PRECORRIN-5B C(1)-METHYLTRANSFERASE"/>
    <property type="match status" value="1"/>
</dbReference>
<dbReference type="Pfam" id="PF01888">
    <property type="entry name" value="CbiD"/>
    <property type="match status" value="1"/>
</dbReference>
<dbReference type="PIRSF" id="PIRSF026782">
    <property type="entry name" value="CbiD"/>
    <property type="match status" value="1"/>
</dbReference>
<dbReference type="SUPFAM" id="SSF111342">
    <property type="entry name" value="CbiD-like"/>
    <property type="match status" value="1"/>
</dbReference>
<proteinExistence type="inferred from homology"/>
<accession>A5I0C8</accession>
<accession>A7G260</accession>
<feature type="chain" id="PRO_1000046854" description="Cobalt-precorrin-5B C(1)-methyltransferase">
    <location>
        <begin position="1"/>
        <end position="359"/>
    </location>
</feature>
<reference key="1">
    <citation type="journal article" date="2007" name="Genome Res.">
        <title>Genome sequence of a proteolytic (Group I) Clostridium botulinum strain Hall A and comparative analysis of the clostridial genomes.</title>
        <authorList>
            <person name="Sebaihia M."/>
            <person name="Peck M.W."/>
            <person name="Minton N.P."/>
            <person name="Thomson N.R."/>
            <person name="Holden M.T.G."/>
            <person name="Mitchell W.J."/>
            <person name="Carter A.T."/>
            <person name="Bentley S.D."/>
            <person name="Mason D.R."/>
            <person name="Crossman L."/>
            <person name="Paul C.J."/>
            <person name="Ivens A."/>
            <person name="Wells-Bennik M.H.J."/>
            <person name="Davis I.J."/>
            <person name="Cerdeno-Tarraga A.M."/>
            <person name="Churcher C."/>
            <person name="Quail M.A."/>
            <person name="Chillingworth T."/>
            <person name="Feltwell T."/>
            <person name="Fraser A."/>
            <person name="Goodhead I."/>
            <person name="Hance Z."/>
            <person name="Jagels K."/>
            <person name="Larke N."/>
            <person name="Maddison M."/>
            <person name="Moule S."/>
            <person name="Mungall K."/>
            <person name="Norbertczak H."/>
            <person name="Rabbinowitsch E."/>
            <person name="Sanders M."/>
            <person name="Simmonds M."/>
            <person name="White B."/>
            <person name="Whithead S."/>
            <person name="Parkhill J."/>
        </authorList>
    </citation>
    <scope>NUCLEOTIDE SEQUENCE [LARGE SCALE GENOMIC DNA]</scope>
    <source>
        <strain>Hall / ATCC 3502 / NCTC 13319 / Type A</strain>
    </source>
</reference>
<reference key="2">
    <citation type="journal article" date="2007" name="PLoS ONE">
        <title>Analysis of the neurotoxin complex genes in Clostridium botulinum A1-A4 and B1 strains: BoNT/A3, /Ba4 and /B1 clusters are located within plasmids.</title>
        <authorList>
            <person name="Smith T.J."/>
            <person name="Hill K.K."/>
            <person name="Foley B.T."/>
            <person name="Detter J.C."/>
            <person name="Munk A.C."/>
            <person name="Bruce D.C."/>
            <person name="Doggett N.A."/>
            <person name="Smith L.A."/>
            <person name="Marks J.D."/>
            <person name="Xie G."/>
            <person name="Brettin T.S."/>
        </authorList>
    </citation>
    <scope>NUCLEOTIDE SEQUENCE [LARGE SCALE GENOMIC DNA]</scope>
    <source>
        <strain>Hall / ATCC 3502 / NCTC 13319 / Type A</strain>
    </source>
</reference>
<keyword id="KW-0169">Cobalamin biosynthesis</keyword>
<keyword id="KW-0489">Methyltransferase</keyword>
<keyword id="KW-1185">Reference proteome</keyword>
<keyword id="KW-0949">S-adenosyl-L-methionine</keyword>
<keyword id="KW-0808">Transferase</keyword>
<comment type="function">
    <text evidence="1">Catalyzes the methylation of C-1 in cobalt-precorrin-5B to form cobalt-precorrin-6A.</text>
</comment>
<comment type="catalytic activity">
    <reaction evidence="1">
        <text>Co-precorrin-5B + S-adenosyl-L-methionine = Co-precorrin-6A + S-adenosyl-L-homocysteine</text>
        <dbReference type="Rhea" id="RHEA:26285"/>
        <dbReference type="ChEBI" id="CHEBI:57856"/>
        <dbReference type="ChEBI" id="CHEBI:59789"/>
        <dbReference type="ChEBI" id="CHEBI:60063"/>
        <dbReference type="ChEBI" id="CHEBI:60064"/>
        <dbReference type="EC" id="2.1.1.195"/>
    </reaction>
</comment>
<comment type="pathway">
    <text evidence="1">Cofactor biosynthesis; adenosylcobalamin biosynthesis; cob(II)yrinate a,c-diamide from sirohydrochlorin (anaerobic route): step 6/10.</text>
</comment>
<comment type="similarity">
    <text evidence="1">Belongs to the CbiD family.</text>
</comment>
<protein>
    <recommendedName>
        <fullName evidence="1">Cobalt-precorrin-5B C(1)-methyltransferase</fullName>
        <ecNumber evidence="1">2.1.1.195</ecNumber>
    </recommendedName>
    <alternativeName>
        <fullName evidence="1">Cobalt-precorrin-6A synthase</fullName>
    </alternativeName>
</protein>
<evidence type="ECO:0000255" key="1">
    <source>
        <dbReference type="HAMAP-Rule" id="MF_00787"/>
    </source>
</evidence>
<organism>
    <name type="scientific">Clostridium botulinum (strain Hall / ATCC 3502 / NCTC 13319 / Type A)</name>
    <dbReference type="NCBI Taxonomy" id="441771"/>
    <lineage>
        <taxon>Bacteria</taxon>
        <taxon>Bacillati</taxon>
        <taxon>Bacillota</taxon>
        <taxon>Clostridia</taxon>
        <taxon>Eubacteriales</taxon>
        <taxon>Clostridiaceae</taxon>
        <taxon>Clostridium</taxon>
    </lineage>
</organism>
<sequence>MLDLYVNCDGKKLRCGYTTGSCAAAAAKAAAIALFYNKKLEEINIDTPKGIELAIPIEKIVEDENFVECAVIKDGGDDVDITHGIEIWARAEKKSSGYTLKGGKGVGVVCGEGLYVKKGEPAINPVPCSMIEKEVRSVMPKDSGVEITIFVPKGEEIAKKTFNPRLNIIGGISILGTTGIVMPMSEDALKVSIELEINQKTCHGEKELILLFGNMGEKMAKELNLKEDNMVIMSNYVGFALNCCMARKLEKVTIVGHIGKISKIASGCFNTHSRVCDTRLETLALELALMGYDKDLVTKIYNEKTTEGAVNLLGEGYEKLYKNLGEKIIRKIEQYTYDSIKADIVMYSMEKGILYSSIE</sequence>
<name>CBID_CLOBH</name>
<gene>
    <name evidence="1" type="primary">cbiD</name>
    <name type="ordered locus">CBO0936</name>
    <name type="ordered locus">CLC_0991</name>
</gene>